<sequence>MTILNHTLGFPRVGLRRELKKAQESYWAGNSTREELLAVGRELRARHWEQQKQAGIDLLPVGDFAWYDHVLTTSLLLGNVPARHQNNDGSVDIDTLFRIGRGRAPTGEPAAAAEMTKWFNTNYHYMVPEFVKGQQFKLTWTQLLEEVDEALALGHKVKPVLLGPVTYLWLGKVKGEQFDRLSLLNDILPVYQQVLAELAKRGIEWVQIDEPALVLELPQAWLDAYKPAYDALQGQVKLLLTTYFEGVTPNLDTITALPVQGLHVDLVHGKDDVAELHKRLPSDWLLSAGLINGRNVWRADLTEKYAQIKDIVGKRDLWVASSCSLLHSPIDLSVETRLDAEVKSWFAFALQKCHELALLRDALNSGDTAALAAWSAPIQARRHSTRVHNPAVEKRLAAITAQDSQRANVYEVRAEAQRARFKLPAWPTTTIGSFPQTTEIRTLRLDFKKGNLDANNYRTGIAEHIKQAIVEQERLGLDVLVHGEAERNDMVEYFGEHLDGFVFTQNGWVQSYGSRCVKPPIVIGDVSRPAPITVEWAKYAQSLTDKPVKGMLTGPVTILCWSFPREDVSRETIAKQIALALRDEVADLEAAGIGIIQIDEPALREGLPLRRSDWDAYLQWGVEAFRINAAVAKDDTQIHTHMCYCEFNDIMDSIAALDADVITIETSRSDMELLESFEEFDYPNEIGPGVYDIHSPNVPSVEWIEALLKKAAKRIPAERLWVNPDCGLKTRGWPETRAALANMVQAAQNLRRG</sequence>
<protein>
    <recommendedName>
        <fullName evidence="1">5-methyltetrahydropteroyltriglutamate--homocysteine methyltransferase</fullName>
        <ecNumber evidence="1">2.1.1.14</ecNumber>
    </recommendedName>
    <alternativeName>
        <fullName evidence="1">Cobalamin-independent methionine synthase</fullName>
    </alternativeName>
    <alternativeName>
        <fullName evidence="1">Methionine synthase, vitamin-B12 independent isozyme</fullName>
    </alternativeName>
</protein>
<reference key="1">
    <citation type="journal article" date="2008" name="J. Bacteriol.">
        <title>Insights into the environmental resistance gene pool from the genome sequence of the multidrug-resistant environmental isolate Escherichia coli SMS-3-5.</title>
        <authorList>
            <person name="Fricke W.F."/>
            <person name="Wright M.S."/>
            <person name="Lindell A.H."/>
            <person name="Harkins D.M."/>
            <person name="Baker-Austin C."/>
            <person name="Ravel J."/>
            <person name="Stepanauskas R."/>
        </authorList>
    </citation>
    <scope>NUCLEOTIDE SEQUENCE [LARGE SCALE GENOMIC DNA]</scope>
    <source>
        <strain>SMS-3-5 / SECEC</strain>
    </source>
</reference>
<keyword id="KW-0028">Amino-acid biosynthesis</keyword>
<keyword id="KW-0479">Metal-binding</keyword>
<keyword id="KW-0486">Methionine biosynthesis</keyword>
<keyword id="KW-0489">Methyltransferase</keyword>
<keyword id="KW-0677">Repeat</keyword>
<keyword id="KW-0808">Transferase</keyword>
<keyword id="KW-0862">Zinc</keyword>
<gene>
    <name evidence="1" type="primary">metE</name>
    <name type="ordered locus">EcSMS35_4195</name>
</gene>
<proteinExistence type="inferred from homology"/>
<comment type="function">
    <text evidence="1">Catalyzes the transfer of a methyl group from 5-methyltetrahydrofolate to homocysteine resulting in methionine formation.</text>
</comment>
<comment type="catalytic activity">
    <reaction evidence="1">
        <text>5-methyltetrahydropteroyltri-L-glutamate + L-homocysteine = tetrahydropteroyltri-L-glutamate + L-methionine</text>
        <dbReference type="Rhea" id="RHEA:21196"/>
        <dbReference type="ChEBI" id="CHEBI:57844"/>
        <dbReference type="ChEBI" id="CHEBI:58140"/>
        <dbReference type="ChEBI" id="CHEBI:58199"/>
        <dbReference type="ChEBI" id="CHEBI:58207"/>
        <dbReference type="EC" id="2.1.1.14"/>
    </reaction>
</comment>
<comment type="cofactor">
    <cofactor evidence="1">
        <name>Zn(2+)</name>
        <dbReference type="ChEBI" id="CHEBI:29105"/>
    </cofactor>
    <text evidence="1">Binds 1 zinc ion per subunit.</text>
</comment>
<comment type="pathway">
    <text evidence="1">Amino-acid biosynthesis; L-methionine biosynthesis via de novo pathway; L-methionine from L-homocysteine (MetE route): step 1/1.</text>
</comment>
<comment type="similarity">
    <text evidence="1">Belongs to the vitamin-B12 independent methionine synthase family.</text>
</comment>
<name>METE_ECOSM</name>
<organism>
    <name type="scientific">Escherichia coli (strain SMS-3-5 / SECEC)</name>
    <dbReference type="NCBI Taxonomy" id="439855"/>
    <lineage>
        <taxon>Bacteria</taxon>
        <taxon>Pseudomonadati</taxon>
        <taxon>Pseudomonadota</taxon>
        <taxon>Gammaproteobacteria</taxon>
        <taxon>Enterobacterales</taxon>
        <taxon>Enterobacteriaceae</taxon>
        <taxon>Escherichia</taxon>
    </lineage>
</organism>
<accession>B1LM00</accession>
<feature type="chain" id="PRO_1000191197" description="5-methyltetrahydropteroyltriglutamate--homocysteine methyltransferase">
    <location>
        <begin position="1"/>
        <end position="753"/>
    </location>
</feature>
<feature type="active site" description="Proton donor" evidence="1">
    <location>
        <position position="694"/>
    </location>
</feature>
<feature type="binding site" evidence="1">
    <location>
        <begin position="17"/>
        <end position="20"/>
    </location>
    <ligand>
        <name>5-methyltetrahydropteroyltri-L-glutamate</name>
        <dbReference type="ChEBI" id="CHEBI:58207"/>
    </ligand>
</feature>
<feature type="binding site" evidence="1">
    <location>
        <position position="117"/>
    </location>
    <ligand>
        <name>5-methyltetrahydropteroyltri-L-glutamate</name>
        <dbReference type="ChEBI" id="CHEBI:58207"/>
    </ligand>
</feature>
<feature type="binding site" evidence="1">
    <location>
        <begin position="431"/>
        <end position="433"/>
    </location>
    <ligand>
        <name>L-homocysteine</name>
        <dbReference type="ChEBI" id="CHEBI:58199"/>
    </ligand>
</feature>
<feature type="binding site" evidence="1">
    <location>
        <begin position="431"/>
        <end position="433"/>
    </location>
    <ligand>
        <name>L-methionine</name>
        <dbReference type="ChEBI" id="CHEBI:57844"/>
    </ligand>
</feature>
<feature type="binding site" evidence="1">
    <location>
        <position position="484"/>
    </location>
    <ligand>
        <name>L-homocysteine</name>
        <dbReference type="ChEBI" id="CHEBI:58199"/>
    </ligand>
</feature>
<feature type="binding site" evidence="1">
    <location>
        <position position="484"/>
    </location>
    <ligand>
        <name>L-methionine</name>
        <dbReference type="ChEBI" id="CHEBI:57844"/>
    </ligand>
</feature>
<feature type="binding site" evidence="1">
    <location>
        <begin position="515"/>
        <end position="516"/>
    </location>
    <ligand>
        <name>5-methyltetrahydropteroyltri-L-glutamate</name>
        <dbReference type="ChEBI" id="CHEBI:58207"/>
    </ligand>
</feature>
<feature type="binding site" evidence="1">
    <location>
        <position position="561"/>
    </location>
    <ligand>
        <name>5-methyltetrahydropteroyltri-L-glutamate</name>
        <dbReference type="ChEBI" id="CHEBI:58207"/>
    </ligand>
</feature>
<feature type="binding site" evidence="1">
    <location>
        <position position="599"/>
    </location>
    <ligand>
        <name>L-homocysteine</name>
        <dbReference type="ChEBI" id="CHEBI:58199"/>
    </ligand>
</feature>
<feature type="binding site" evidence="1">
    <location>
        <position position="599"/>
    </location>
    <ligand>
        <name>L-methionine</name>
        <dbReference type="ChEBI" id="CHEBI:57844"/>
    </ligand>
</feature>
<feature type="binding site" evidence="1">
    <location>
        <position position="605"/>
    </location>
    <ligand>
        <name>5-methyltetrahydropteroyltri-L-glutamate</name>
        <dbReference type="ChEBI" id="CHEBI:58207"/>
    </ligand>
</feature>
<feature type="binding site" evidence="1">
    <location>
        <position position="641"/>
    </location>
    <ligand>
        <name>Zn(2+)</name>
        <dbReference type="ChEBI" id="CHEBI:29105"/>
        <note>catalytic</note>
    </ligand>
</feature>
<feature type="binding site" evidence="1">
    <location>
        <position position="643"/>
    </location>
    <ligand>
        <name>Zn(2+)</name>
        <dbReference type="ChEBI" id="CHEBI:29105"/>
        <note>catalytic</note>
    </ligand>
</feature>
<feature type="binding site" evidence="1">
    <location>
        <position position="665"/>
    </location>
    <ligand>
        <name>Zn(2+)</name>
        <dbReference type="ChEBI" id="CHEBI:29105"/>
        <note>catalytic</note>
    </ligand>
</feature>
<feature type="binding site" evidence="1">
    <location>
        <position position="726"/>
    </location>
    <ligand>
        <name>Zn(2+)</name>
        <dbReference type="ChEBI" id="CHEBI:29105"/>
        <note>catalytic</note>
    </ligand>
</feature>
<dbReference type="EC" id="2.1.1.14" evidence="1"/>
<dbReference type="EMBL" id="CP000970">
    <property type="protein sequence ID" value="ACB19810.1"/>
    <property type="molecule type" value="Genomic_DNA"/>
</dbReference>
<dbReference type="RefSeq" id="WP_000153958.1">
    <property type="nucleotide sequence ID" value="NC_010498.1"/>
</dbReference>
<dbReference type="SMR" id="B1LM00"/>
<dbReference type="KEGG" id="ecm:EcSMS35_4195"/>
<dbReference type="HOGENOM" id="CLU_013175_0_0_6"/>
<dbReference type="UniPathway" id="UPA00051">
    <property type="reaction ID" value="UER00082"/>
</dbReference>
<dbReference type="Proteomes" id="UP000007011">
    <property type="component" value="Chromosome"/>
</dbReference>
<dbReference type="GO" id="GO:0003871">
    <property type="term" value="F:5-methyltetrahydropteroyltriglutamate-homocysteine S-methyltransferase activity"/>
    <property type="evidence" value="ECO:0007669"/>
    <property type="project" value="UniProtKB-UniRule"/>
</dbReference>
<dbReference type="GO" id="GO:0008270">
    <property type="term" value="F:zinc ion binding"/>
    <property type="evidence" value="ECO:0007669"/>
    <property type="project" value="InterPro"/>
</dbReference>
<dbReference type="GO" id="GO:0009086">
    <property type="term" value="P:methionine biosynthetic process"/>
    <property type="evidence" value="ECO:0007669"/>
    <property type="project" value="UniProtKB-UniRule"/>
</dbReference>
<dbReference type="GO" id="GO:0032259">
    <property type="term" value="P:methylation"/>
    <property type="evidence" value="ECO:0007669"/>
    <property type="project" value="UniProtKB-KW"/>
</dbReference>
<dbReference type="CDD" id="cd03311">
    <property type="entry name" value="CIMS_C_terminal_like"/>
    <property type="match status" value="1"/>
</dbReference>
<dbReference type="CDD" id="cd03312">
    <property type="entry name" value="CIMS_N_terminal_like"/>
    <property type="match status" value="1"/>
</dbReference>
<dbReference type="FunFam" id="3.20.20.210:FF:000002">
    <property type="entry name" value="5-methyltetrahydropteroyltriglutamate--homocysteine methyltransferase"/>
    <property type="match status" value="1"/>
</dbReference>
<dbReference type="FunFam" id="3.20.20.210:FF:000003">
    <property type="entry name" value="5-methyltetrahydropteroyltriglutamate--homocysteine methyltransferase"/>
    <property type="match status" value="1"/>
</dbReference>
<dbReference type="Gene3D" id="3.20.20.210">
    <property type="match status" value="2"/>
</dbReference>
<dbReference type="HAMAP" id="MF_00172">
    <property type="entry name" value="Meth_synth"/>
    <property type="match status" value="1"/>
</dbReference>
<dbReference type="InterPro" id="IPR013215">
    <property type="entry name" value="Cbl-indep_Met_Synth_N"/>
</dbReference>
<dbReference type="InterPro" id="IPR006276">
    <property type="entry name" value="Cobalamin-indep_Met_synthase"/>
</dbReference>
<dbReference type="InterPro" id="IPR002629">
    <property type="entry name" value="Met_Synth_C/arc"/>
</dbReference>
<dbReference type="InterPro" id="IPR038071">
    <property type="entry name" value="UROD/MetE-like_sf"/>
</dbReference>
<dbReference type="NCBIfam" id="TIGR01371">
    <property type="entry name" value="met_syn_B12ind"/>
    <property type="match status" value="1"/>
</dbReference>
<dbReference type="NCBIfam" id="NF003556">
    <property type="entry name" value="PRK05222.1"/>
    <property type="match status" value="1"/>
</dbReference>
<dbReference type="PANTHER" id="PTHR30519">
    <property type="entry name" value="5-METHYLTETRAHYDROPTEROYLTRIGLUTAMATE--HOMOCYSTEINE METHYLTRANSFERASE"/>
    <property type="match status" value="1"/>
</dbReference>
<dbReference type="Pfam" id="PF08267">
    <property type="entry name" value="Meth_synt_1"/>
    <property type="match status" value="1"/>
</dbReference>
<dbReference type="Pfam" id="PF01717">
    <property type="entry name" value="Meth_synt_2"/>
    <property type="match status" value="1"/>
</dbReference>
<dbReference type="PIRSF" id="PIRSF000382">
    <property type="entry name" value="MeTrfase_B12_ind"/>
    <property type="match status" value="1"/>
</dbReference>
<dbReference type="SUPFAM" id="SSF51726">
    <property type="entry name" value="UROD/MetE-like"/>
    <property type="match status" value="2"/>
</dbReference>
<evidence type="ECO:0000255" key="1">
    <source>
        <dbReference type="HAMAP-Rule" id="MF_00172"/>
    </source>
</evidence>